<reference key="1">
    <citation type="submission" date="2006-08" db="EMBL/GenBank/DDBJ databases">
        <title>Complete sequence of Alkalilimnicola ehrilichei MLHE-1.</title>
        <authorList>
            <person name="Copeland A."/>
            <person name="Lucas S."/>
            <person name="Lapidus A."/>
            <person name="Barry K."/>
            <person name="Detter J.C."/>
            <person name="Glavina del Rio T."/>
            <person name="Hammon N."/>
            <person name="Israni S."/>
            <person name="Dalin E."/>
            <person name="Tice H."/>
            <person name="Pitluck S."/>
            <person name="Sims D."/>
            <person name="Brettin T."/>
            <person name="Bruce D."/>
            <person name="Han C."/>
            <person name="Tapia R."/>
            <person name="Gilna P."/>
            <person name="Schmutz J."/>
            <person name="Larimer F."/>
            <person name="Land M."/>
            <person name="Hauser L."/>
            <person name="Kyrpides N."/>
            <person name="Mikhailova N."/>
            <person name="Oremland R.S."/>
            <person name="Hoeft S.E."/>
            <person name="Switzer-Blum J."/>
            <person name="Kulp T."/>
            <person name="King G."/>
            <person name="Tabita R."/>
            <person name="Witte B."/>
            <person name="Santini J.M."/>
            <person name="Basu P."/>
            <person name="Hollibaugh J.T."/>
            <person name="Xie G."/>
            <person name="Stolz J.F."/>
            <person name="Richardson P."/>
        </authorList>
    </citation>
    <scope>NUCLEOTIDE SEQUENCE [LARGE SCALE GENOMIC DNA]</scope>
    <source>
        <strain>ATCC BAA-1101 / DSM 17681 / MLHE-1</strain>
    </source>
</reference>
<sequence length="391" mass="41676">MNAGALSRMLSEGLAARRAEGLYRSPRVLKSVDGACGLTADGRTVVVFCANDYLGLASDPRPGRVMARVAEEQGAGSGAAHLVSGHRPEHEALERALADWTGREAALLFSTGYMANLGVIDALVGRGDTVFEDRLNHASLLDGARLSGARLRRYRHGDVDHLARRLAEDGGRHRLIVTDGVFSMDGDRAPVAELARLARDHGAWLMVDDAHGLGVLGEKGGGLLEQSGLDQDDVPVLVGTLGKAVGSFGAFVAGRRLLIDHLVQSARTWIYTTAPSPAQTAATVEAVRLARHETWRREHLRALVRRFRAGIADLGLDLMPSETPIQPIVVGEADQALQASRALEERGYLVTAIRPPTVPKGTARLRVTLSAAHTPQQVDGLVAALGQVLGQ</sequence>
<comment type="function">
    <text evidence="1">Catalyzes the decarboxylative condensation of pimeloyl-[acyl-carrier protein] and L-alanine to produce 8-amino-7-oxononanoate (AON), [acyl-carrier protein], and carbon dioxide.</text>
</comment>
<comment type="catalytic activity">
    <reaction evidence="1">
        <text>6-carboxyhexanoyl-[ACP] + L-alanine + H(+) = (8S)-8-amino-7-oxononanoate + holo-[ACP] + CO2</text>
        <dbReference type="Rhea" id="RHEA:42288"/>
        <dbReference type="Rhea" id="RHEA-COMP:9685"/>
        <dbReference type="Rhea" id="RHEA-COMP:9955"/>
        <dbReference type="ChEBI" id="CHEBI:15378"/>
        <dbReference type="ChEBI" id="CHEBI:16526"/>
        <dbReference type="ChEBI" id="CHEBI:57972"/>
        <dbReference type="ChEBI" id="CHEBI:64479"/>
        <dbReference type="ChEBI" id="CHEBI:78846"/>
        <dbReference type="ChEBI" id="CHEBI:149468"/>
        <dbReference type="EC" id="2.3.1.47"/>
    </reaction>
</comment>
<comment type="cofactor">
    <cofactor evidence="1">
        <name>pyridoxal 5'-phosphate</name>
        <dbReference type="ChEBI" id="CHEBI:597326"/>
    </cofactor>
</comment>
<comment type="pathway">
    <text evidence="1">Cofactor biosynthesis; biotin biosynthesis.</text>
</comment>
<comment type="subunit">
    <text evidence="1">Homodimer.</text>
</comment>
<comment type="similarity">
    <text evidence="1">Belongs to the class-II pyridoxal-phosphate-dependent aminotransferase family. BioF subfamily.</text>
</comment>
<protein>
    <recommendedName>
        <fullName evidence="1">8-amino-7-oxononanoate synthase</fullName>
        <shortName evidence="1">AONS</shortName>
        <ecNumber evidence="1">2.3.1.47</ecNumber>
    </recommendedName>
    <alternativeName>
        <fullName evidence="1">7-keto-8-amino-pelargonic acid synthase</fullName>
        <shortName evidence="1">7-KAP synthase</shortName>
        <shortName evidence="1">KAPA synthase</shortName>
    </alternativeName>
    <alternativeName>
        <fullName evidence="1">8-amino-7-ketopelargonate synthase</fullName>
    </alternativeName>
</protein>
<proteinExistence type="inferred from homology"/>
<gene>
    <name evidence="1" type="primary">bioF</name>
    <name type="ordered locus">Mlg_2435</name>
</gene>
<dbReference type="EC" id="2.3.1.47" evidence="1"/>
<dbReference type="EMBL" id="CP000453">
    <property type="protein sequence ID" value="ABI57775.1"/>
    <property type="molecule type" value="Genomic_DNA"/>
</dbReference>
<dbReference type="RefSeq" id="WP_011630168.1">
    <property type="nucleotide sequence ID" value="NC_008340.1"/>
</dbReference>
<dbReference type="SMR" id="Q0A5W2"/>
<dbReference type="KEGG" id="aeh:Mlg_2435"/>
<dbReference type="eggNOG" id="COG0156">
    <property type="taxonomic scope" value="Bacteria"/>
</dbReference>
<dbReference type="HOGENOM" id="CLU_015846_11_2_6"/>
<dbReference type="OrthoDB" id="9807157at2"/>
<dbReference type="UniPathway" id="UPA00078"/>
<dbReference type="Proteomes" id="UP000001962">
    <property type="component" value="Chromosome"/>
</dbReference>
<dbReference type="GO" id="GO:0008710">
    <property type="term" value="F:8-amino-7-oxononanoate synthase activity"/>
    <property type="evidence" value="ECO:0007669"/>
    <property type="project" value="UniProtKB-UniRule"/>
</dbReference>
<dbReference type="GO" id="GO:0030170">
    <property type="term" value="F:pyridoxal phosphate binding"/>
    <property type="evidence" value="ECO:0007669"/>
    <property type="project" value="UniProtKB-UniRule"/>
</dbReference>
<dbReference type="GO" id="GO:0009102">
    <property type="term" value="P:biotin biosynthetic process"/>
    <property type="evidence" value="ECO:0007669"/>
    <property type="project" value="UniProtKB-UniRule"/>
</dbReference>
<dbReference type="CDD" id="cd06454">
    <property type="entry name" value="KBL_like"/>
    <property type="match status" value="1"/>
</dbReference>
<dbReference type="Gene3D" id="3.90.1150.10">
    <property type="entry name" value="Aspartate Aminotransferase, domain 1"/>
    <property type="match status" value="1"/>
</dbReference>
<dbReference type="Gene3D" id="3.40.640.10">
    <property type="entry name" value="Type I PLP-dependent aspartate aminotransferase-like (Major domain)"/>
    <property type="match status" value="1"/>
</dbReference>
<dbReference type="HAMAP" id="MF_01693">
    <property type="entry name" value="BioF_aminotrans_2"/>
    <property type="match status" value="1"/>
</dbReference>
<dbReference type="InterPro" id="IPR001917">
    <property type="entry name" value="Aminotrans_II_pyridoxalP_BS"/>
</dbReference>
<dbReference type="InterPro" id="IPR004839">
    <property type="entry name" value="Aminotransferase_I/II_large"/>
</dbReference>
<dbReference type="InterPro" id="IPR050087">
    <property type="entry name" value="AON_synthase_class-II"/>
</dbReference>
<dbReference type="InterPro" id="IPR004723">
    <property type="entry name" value="AONS_Archaea/Proteobacteria"/>
</dbReference>
<dbReference type="InterPro" id="IPR022834">
    <property type="entry name" value="AONS_Proteobacteria"/>
</dbReference>
<dbReference type="InterPro" id="IPR015424">
    <property type="entry name" value="PyrdxlP-dep_Trfase"/>
</dbReference>
<dbReference type="InterPro" id="IPR015421">
    <property type="entry name" value="PyrdxlP-dep_Trfase_major"/>
</dbReference>
<dbReference type="InterPro" id="IPR015422">
    <property type="entry name" value="PyrdxlP-dep_Trfase_small"/>
</dbReference>
<dbReference type="NCBIfam" id="TIGR00858">
    <property type="entry name" value="bioF"/>
    <property type="match status" value="1"/>
</dbReference>
<dbReference type="PANTHER" id="PTHR13693:SF100">
    <property type="entry name" value="8-AMINO-7-OXONONANOATE SYNTHASE"/>
    <property type="match status" value="1"/>
</dbReference>
<dbReference type="PANTHER" id="PTHR13693">
    <property type="entry name" value="CLASS II AMINOTRANSFERASE/8-AMINO-7-OXONONANOATE SYNTHASE"/>
    <property type="match status" value="1"/>
</dbReference>
<dbReference type="Pfam" id="PF00155">
    <property type="entry name" value="Aminotran_1_2"/>
    <property type="match status" value="1"/>
</dbReference>
<dbReference type="SUPFAM" id="SSF53383">
    <property type="entry name" value="PLP-dependent transferases"/>
    <property type="match status" value="1"/>
</dbReference>
<dbReference type="PROSITE" id="PS00599">
    <property type="entry name" value="AA_TRANSFER_CLASS_2"/>
    <property type="match status" value="1"/>
</dbReference>
<organism>
    <name type="scientific">Alkalilimnicola ehrlichii (strain ATCC BAA-1101 / DSM 17681 / MLHE-1)</name>
    <dbReference type="NCBI Taxonomy" id="187272"/>
    <lineage>
        <taxon>Bacteria</taxon>
        <taxon>Pseudomonadati</taxon>
        <taxon>Pseudomonadota</taxon>
        <taxon>Gammaproteobacteria</taxon>
        <taxon>Chromatiales</taxon>
        <taxon>Ectothiorhodospiraceae</taxon>
        <taxon>Alkalilimnicola</taxon>
    </lineage>
</organism>
<feature type="chain" id="PRO_0000380890" description="8-amino-7-oxononanoate synthase">
    <location>
        <begin position="1"/>
        <end position="391"/>
    </location>
</feature>
<feature type="binding site" evidence="1">
    <location>
        <position position="24"/>
    </location>
    <ligand>
        <name>substrate</name>
    </ligand>
</feature>
<feature type="binding site" evidence="1">
    <location>
        <begin position="112"/>
        <end position="113"/>
    </location>
    <ligand>
        <name>pyridoxal 5'-phosphate</name>
        <dbReference type="ChEBI" id="CHEBI:597326"/>
    </ligand>
</feature>
<feature type="binding site" evidence="1">
    <location>
        <position position="137"/>
    </location>
    <ligand>
        <name>substrate</name>
    </ligand>
</feature>
<feature type="binding site" evidence="1">
    <location>
        <position position="183"/>
    </location>
    <ligand>
        <name>pyridoxal 5'-phosphate</name>
        <dbReference type="ChEBI" id="CHEBI:597326"/>
    </ligand>
</feature>
<feature type="binding site" evidence="1">
    <location>
        <position position="211"/>
    </location>
    <ligand>
        <name>pyridoxal 5'-phosphate</name>
        <dbReference type="ChEBI" id="CHEBI:597326"/>
    </ligand>
</feature>
<feature type="binding site" evidence="1">
    <location>
        <position position="240"/>
    </location>
    <ligand>
        <name>pyridoxal 5'-phosphate</name>
        <dbReference type="ChEBI" id="CHEBI:597326"/>
    </ligand>
</feature>
<feature type="binding site" evidence="1">
    <location>
        <position position="357"/>
    </location>
    <ligand>
        <name>substrate</name>
    </ligand>
</feature>
<feature type="modified residue" description="N6-(pyridoxal phosphate)lysine" evidence="1">
    <location>
        <position position="243"/>
    </location>
</feature>
<keyword id="KW-0093">Biotin biosynthesis</keyword>
<keyword id="KW-0663">Pyridoxal phosphate</keyword>
<keyword id="KW-1185">Reference proteome</keyword>
<keyword id="KW-0808">Transferase</keyword>
<name>BIOF_ALKEH</name>
<accession>Q0A5W2</accession>
<evidence type="ECO:0000255" key="1">
    <source>
        <dbReference type="HAMAP-Rule" id="MF_01693"/>
    </source>
</evidence>